<organism>
    <name type="scientific">Arabidopsis thaliana</name>
    <name type="common">Mouse-ear cress</name>
    <dbReference type="NCBI Taxonomy" id="3702"/>
    <lineage>
        <taxon>Eukaryota</taxon>
        <taxon>Viridiplantae</taxon>
        <taxon>Streptophyta</taxon>
        <taxon>Embryophyta</taxon>
        <taxon>Tracheophyta</taxon>
        <taxon>Spermatophyta</taxon>
        <taxon>Magnoliopsida</taxon>
        <taxon>eudicotyledons</taxon>
        <taxon>Gunneridae</taxon>
        <taxon>Pentapetalae</taxon>
        <taxon>rosids</taxon>
        <taxon>malvids</taxon>
        <taxon>Brassicales</taxon>
        <taxon>Brassicaceae</taxon>
        <taxon>Camelineae</taxon>
        <taxon>Arabidopsis</taxon>
    </lineage>
</organism>
<gene>
    <name evidence="7" type="primary">CST</name>
    <name evidence="8" type="synonym">CX32</name>
    <name evidence="6" type="synonym">KIN4</name>
    <name type="ordered locus">At4g35600</name>
    <name type="ORF">F8D20.110</name>
</gene>
<sequence>MGACISFFSSSSPSKTGLHSHATTNNHSNGTEFSSTTGATTNSSVGQQSQFSDISTGIISDSGKLLESPNLKVYNFLDLKTATKNFKPDSMLGQGGFGKVYRGWVDATTLAPSRVGSGMIVAIKRLNSESVQGFAEWRSEVNFLGMLSHRNLVKLLGYCREDKELLLVYEFMPKGSLESHLFRRNDPFPWDLRIKIVIGAARGLAFLHSLQREVIYRDFKASNILLDSNYDAKLSDFGLAKLGPADEKSHVTTRIMGTYGYAAPEYMATGHLYVKSDVFAFGVVLLEIMTGLTAHNTKRPRGQESLVDWLRPELSNKHRVKQIMDKGIKGQYTTKVATEMARITLSCIEPDPKNRPHMKEVVEVLEHIQGLNVVPNRSSTKQAVANSSRSSPHHYRYKAGALGAERKRATPGRFGSVEK</sequence>
<dbReference type="EC" id="2.7.11.1" evidence="9"/>
<dbReference type="EMBL" id="M63234">
    <property type="protein sequence ID" value="AAA32850.1"/>
    <property type="status" value="ALT_SEQ"/>
    <property type="molecule type" value="mRNA"/>
</dbReference>
<dbReference type="EMBL" id="AL031135">
    <property type="protein sequence ID" value="CAA20030.1"/>
    <property type="status" value="ALT_SEQ"/>
    <property type="molecule type" value="Genomic_DNA"/>
</dbReference>
<dbReference type="EMBL" id="AL161587">
    <property type="protein sequence ID" value="CAB80276.1"/>
    <property type="status" value="ALT_SEQ"/>
    <property type="molecule type" value="Genomic_DNA"/>
</dbReference>
<dbReference type="EMBL" id="CP002687">
    <property type="protein sequence ID" value="AEE86538.1"/>
    <property type="molecule type" value="Genomic_DNA"/>
</dbReference>
<dbReference type="EMBL" id="AY065403">
    <property type="protein sequence ID" value="AAL38844.1"/>
    <property type="molecule type" value="mRNA"/>
</dbReference>
<dbReference type="EMBL" id="AY096501">
    <property type="protein sequence ID" value="AAM20151.1"/>
    <property type="molecule type" value="mRNA"/>
</dbReference>
<dbReference type="PIR" id="A39357">
    <property type="entry name" value="A39357"/>
</dbReference>
<dbReference type="PIR" id="C85420">
    <property type="entry name" value="C85420"/>
</dbReference>
<dbReference type="PIR" id="T04665">
    <property type="entry name" value="T04665"/>
</dbReference>
<dbReference type="RefSeq" id="NP_195285.3">
    <molecule id="P27450-1"/>
    <property type="nucleotide sequence ID" value="NM_119725.5"/>
</dbReference>
<dbReference type="SMR" id="P27450"/>
<dbReference type="BioGRID" id="14994">
    <property type="interactions" value="13"/>
</dbReference>
<dbReference type="FunCoup" id="P27450">
    <property type="interactions" value="2332"/>
</dbReference>
<dbReference type="IntAct" id="P27450">
    <property type="interactions" value="8"/>
</dbReference>
<dbReference type="STRING" id="3702.P27450"/>
<dbReference type="iPTMnet" id="P27450"/>
<dbReference type="PaxDb" id="3702-AT4G35600.2"/>
<dbReference type="ProteomicsDB" id="222631">
    <molecule id="P27450-1"/>
</dbReference>
<dbReference type="EnsemblPlants" id="AT4G35600.1">
    <molecule id="P27450-1"/>
    <property type="protein sequence ID" value="AT4G35600.1"/>
    <property type="gene ID" value="AT4G35600"/>
</dbReference>
<dbReference type="GeneID" id="829712"/>
<dbReference type="Gramene" id="AT4G35600.1">
    <molecule id="P27450-1"/>
    <property type="protein sequence ID" value="AT4G35600.1"/>
    <property type="gene ID" value="AT4G35600"/>
</dbReference>
<dbReference type="KEGG" id="ath:AT4G35600"/>
<dbReference type="Araport" id="AT4G35600"/>
<dbReference type="TAIR" id="AT4G35600">
    <property type="gene designation" value="CST"/>
</dbReference>
<dbReference type="eggNOG" id="KOG1187">
    <property type="taxonomic scope" value="Eukaryota"/>
</dbReference>
<dbReference type="HOGENOM" id="CLU_000288_21_2_1"/>
<dbReference type="InParanoid" id="P27450"/>
<dbReference type="OrthoDB" id="4062651at2759"/>
<dbReference type="PhylomeDB" id="P27450"/>
<dbReference type="PRO" id="PR:P27450"/>
<dbReference type="Proteomes" id="UP000006548">
    <property type="component" value="Chromosome 4"/>
</dbReference>
<dbReference type="ExpressionAtlas" id="P27450">
    <property type="expression patterns" value="baseline and differential"/>
</dbReference>
<dbReference type="GO" id="GO:0005634">
    <property type="term" value="C:nucleus"/>
    <property type="evidence" value="ECO:0000314"/>
    <property type="project" value="UniProtKB"/>
</dbReference>
<dbReference type="GO" id="GO:0005886">
    <property type="term" value="C:plasma membrane"/>
    <property type="evidence" value="ECO:0000314"/>
    <property type="project" value="UniProtKB"/>
</dbReference>
<dbReference type="GO" id="GO:0005524">
    <property type="term" value="F:ATP binding"/>
    <property type="evidence" value="ECO:0007669"/>
    <property type="project" value="UniProtKB-KW"/>
</dbReference>
<dbReference type="GO" id="GO:0106310">
    <property type="term" value="F:protein serine kinase activity"/>
    <property type="evidence" value="ECO:0007669"/>
    <property type="project" value="RHEA"/>
</dbReference>
<dbReference type="GO" id="GO:0004674">
    <property type="term" value="F:protein serine/threonine kinase activity"/>
    <property type="evidence" value="ECO:0007669"/>
    <property type="project" value="UniProtKB-KW"/>
</dbReference>
<dbReference type="GO" id="GO:0060862">
    <property type="term" value="P:negative regulation of floral organ abscission"/>
    <property type="evidence" value="ECO:0000315"/>
    <property type="project" value="UniProtKB"/>
</dbReference>
<dbReference type="CDD" id="cd14066">
    <property type="entry name" value="STKc_IRAK"/>
    <property type="match status" value="1"/>
</dbReference>
<dbReference type="FunFam" id="1.10.510.10:FF:000095">
    <property type="entry name" value="protein STRUBBELIG-RECEPTOR FAMILY 8"/>
    <property type="match status" value="1"/>
</dbReference>
<dbReference type="FunFam" id="3.30.200.20:FF:000228">
    <property type="entry name" value="Serine/threonine-protein kinase BIK1"/>
    <property type="match status" value="1"/>
</dbReference>
<dbReference type="Gene3D" id="3.30.200.20">
    <property type="entry name" value="Phosphorylase Kinase, domain 1"/>
    <property type="match status" value="1"/>
</dbReference>
<dbReference type="Gene3D" id="1.10.510.10">
    <property type="entry name" value="Transferase(Phosphotransferase) domain 1"/>
    <property type="match status" value="1"/>
</dbReference>
<dbReference type="InterPro" id="IPR011009">
    <property type="entry name" value="Kinase-like_dom_sf"/>
</dbReference>
<dbReference type="InterPro" id="IPR050823">
    <property type="entry name" value="Plant_Ser_Thr_Prot_Kinase"/>
</dbReference>
<dbReference type="InterPro" id="IPR000719">
    <property type="entry name" value="Prot_kinase_dom"/>
</dbReference>
<dbReference type="InterPro" id="IPR017441">
    <property type="entry name" value="Protein_kinase_ATP_BS"/>
</dbReference>
<dbReference type="InterPro" id="IPR001245">
    <property type="entry name" value="Ser-Thr/Tyr_kinase_cat_dom"/>
</dbReference>
<dbReference type="InterPro" id="IPR008271">
    <property type="entry name" value="Ser/Thr_kinase_AS"/>
</dbReference>
<dbReference type="PANTHER" id="PTHR45621">
    <property type="entry name" value="OS01G0588500 PROTEIN-RELATED"/>
    <property type="match status" value="1"/>
</dbReference>
<dbReference type="Pfam" id="PF07714">
    <property type="entry name" value="PK_Tyr_Ser-Thr"/>
    <property type="match status" value="1"/>
</dbReference>
<dbReference type="SUPFAM" id="SSF56112">
    <property type="entry name" value="Protein kinase-like (PK-like)"/>
    <property type="match status" value="1"/>
</dbReference>
<dbReference type="PROSITE" id="PS00107">
    <property type="entry name" value="PROTEIN_KINASE_ATP"/>
    <property type="match status" value="1"/>
</dbReference>
<dbReference type="PROSITE" id="PS50011">
    <property type="entry name" value="PROTEIN_KINASE_DOM"/>
    <property type="match status" value="1"/>
</dbReference>
<dbReference type="PROSITE" id="PS00108">
    <property type="entry name" value="PROTEIN_KINASE_ST"/>
    <property type="match status" value="1"/>
</dbReference>
<comment type="function">
    <text evidence="5">Acts as a spatial inhibitor of signaling that modulates abscission zone cell adhesion and expansion. Acts both directly and indirectly by physically interacting with RLK5/HAE and SOBIR1/EVR at the cell surface.</text>
</comment>
<comment type="catalytic activity">
    <reaction evidence="9">
        <text>L-seryl-[protein] + ATP = O-phospho-L-seryl-[protein] + ADP + H(+)</text>
        <dbReference type="Rhea" id="RHEA:17989"/>
        <dbReference type="Rhea" id="RHEA-COMP:9863"/>
        <dbReference type="Rhea" id="RHEA-COMP:11604"/>
        <dbReference type="ChEBI" id="CHEBI:15378"/>
        <dbReference type="ChEBI" id="CHEBI:29999"/>
        <dbReference type="ChEBI" id="CHEBI:30616"/>
        <dbReference type="ChEBI" id="CHEBI:83421"/>
        <dbReference type="ChEBI" id="CHEBI:456216"/>
        <dbReference type="EC" id="2.7.11.1"/>
    </reaction>
</comment>
<comment type="catalytic activity">
    <reaction evidence="9">
        <text>L-threonyl-[protein] + ATP = O-phospho-L-threonyl-[protein] + ADP + H(+)</text>
        <dbReference type="Rhea" id="RHEA:46608"/>
        <dbReference type="Rhea" id="RHEA-COMP:11060"/>
        <dbReference type="Rhea" id="RHEA-COMP:11605"/>
        <dbReference type="ChEBI" id="CHEBI:15378"/>
        <dbReference type="ChEBI" id="CHEBI:30013"/>
        <dbReference type="ChEBI" id="CHEBI:30616"/>
        <dbReference type="ChEBI" id="CHEBI:61977"/>
        <dbReference type="ChEBI" id="CHEBI:456216"/>
        <dbReference type="EC" id="2.7.11.1"/>
    </reaction>
</comment>
<comment type="subunit">
    <text evidence="5">Interacts with SOBIR1/EVR and RLK5/HAE.</text>
</comment>
<comment type="subcellular location">
    <subcellularLocation>
        <location evidence="4 5">Cell membrane</location>
        <topology evidence="5 11">Lipid-anchor</topology>
    </subcellularLocation>
    <subcellularLocation>
        <location evidence="4">Nucleus</location>
    </subcellularLocation>
    <text evidence="4">Predominantly localized at the plasma membrane.</text>
</comment>
<comment type="alternative products">
    <event type="alternative splicing"/>
    <isoform>
        <id>P27450-1</id>
        <name>1</name>
        <sequence type="displayed"/>
    </isoform>
    <text>A number of isoforms are produced. According to EST sequences.</text>
</comment>
<comment type="PTM">
    <text evidence="5">Autophosphorylated on serine, threonine and tyrosine residues.</text>
</comment>
<comment type="similarity">
    <text evidence="2">Belongs to the protein kinase superfamily. Ser/Thr protein kinase family.</text>
</comment>
<comment type="caution">
    <text evidence="10">Was originally (PubMed:1851993) reported to be a connexin and to contain transmembrane domains. PubMed:8400879 authors have assigned that this is not a connexin, but rather a protein kinase.</text>
</comment>
<comment type="sequence caution" evidence="9">
    <conflict type="frameshift">
        <sequence resource="EMBL-CDS" id="AAA32850"/>
    </conflict>
</comment>
<comment type="sequence caution" evidence="9">
    <conflict type="miscellaneous discrepancy">
        <sequence resource="EMBL-CDS" id="AAA32850"/>
    </conflict>
    <text>Sequencing errors.</text>
</comment>
<comment type="sequence caution" evidence="9">
    <conflict type="erroneous gene model prediction">
        <sequence resource="EMBL-CDS" id="CAA20030"/>
    </conflict>
</comment>
<comment type="sequence caution" evidence="9">
    <conflict type="erroneous gene model prediction">
        <sequence resource="EMBL-CDS" id="CAB80276"/>
    </conflict>
</comment>
<protein>
    <recommendedName>
        <fullName evidence="9">Probable serine/threonine-protein kinase CST</fullName>
        <ecNumber evidence="9">2.7.11.1</ecNumber>
    </recommendedName>
    <alternativeName>
        <fullName evidence="7">Protein CAST AWAY</fullName>
    </alternativeName>
</protein>
<feature type="initiator methionine" description="Removed" evidence="11 12">
    <location>
        <position position="1"/>
    </location>
</feature>
<feature type="chain" id="PRO_0000024321" description="Probable serine/threonine-protein kinase CST">
    <location>
        <begin position="2"/>
        <end position="419"/>
    </location>
</feature>
<feature type="domain" description="Protein kinase" evidence="2">
    <location>
        <begin position="86"/>
        <end position="368"/>
    </location>
</feature>
<feature type="region of interest" description="Disordered" evidence="3">
    <location>
        <begin position="8"/>
        <end position="48"/>
    </location>
</feature>
<feature type="region of interest" description="Disordered" evidence="3">
    <location>
        <begin position="378"/>
        <end position="419"/>
    </location>
</feature>
<feature type="compositionally biased region" description="Polar residues" evidence="3">
    <location>
        <begin position="15"/>
        <end position="48"/>
    </location>
</feature>
<feature type="compositionally biased region" description="Polar residues" evidence="3">
    <location>
        <begin position="378"/>
        <end position="390"/>
    </location>
</feature>
<feature type="active site" description="Proton acceptor" evidence="2">
    <location>
        <position position="218"/>
    </location>
</feature>
<feature type="binding site" evidence="2">
    <location>
        <begin position="92"/>
        <end position="100"/>
    </location>
    <ligand>
        <name>ATP</name>
        <dbReference type="ChEBI" id="CHEBI:30616"/>
    </ligand>
</feature>
<feature type="binding site" evidence="2">
    <location>
        <position position="124"/>
    </location>
    <ligand>
        <name>ATP</name>
        <dbReference type="ChEBI" id="CHEBI:30616"/>
    </ligand>
</feature>
<feature type="modified residue" description="Phosphoserine" evidence="13 14 15">
    <location>
        <position position="117"/>
    </location>
</feature>
<feature type="modified residue" description="Phosphotyrosine" evidence="1">
    <location>
        <position position="169"/>
    </location>
</feature>
<feature type="modified residue" description="Phosphoserine" evidence="1">
    <location>
        <position position="222"/>
    </location>
</feature>
<feature type="modified residue" description="Phosphothreonine" evidence="1">
    <location>
        <position position="253"/>
    </location>
</feature>
<feature type="modified residue" description="Phosphothreonine" evidence="1">
    <location>
        <position position="258"/>
    </location>
</feature>
<feature type="modified residue" description="Phosphotyrosine" evidence="1">
    <location>
        <position position="266"/>
    </location>
</feature>
<feature type="lipid moiety-binding region" description="N-myristoyl glycine" evidence="11 12">
    <location>
        <position position="2"/>
    </location>
</feature>
<feature type="lipid moiety-binding region" description="S-palmitoyl cysteine" evidence="12">
    <location>
        <position position="4"/>
    </location>
</feature>
<feature type="mutagenesis site" description="Drastic reduction of plasma membrane localization and strong increase of nuclear localization. Partial redistribution from the plasma membrane to the cytoplasm." evidence="4 5">
    <original>G</original>
    <variation>A</variation>
    <location>
        <position position="2"/>
    </location>
</feature>
<feature type="mutagenesis site" description="Partial redistribution from the plasma membrane to the cytoplasm." evidence="5">
    <original>C</original>
    <variation>S</variation>
    <location>
        <position position="4"/>
    </location>
</feature>
<feature type="mutagenesis site" description="Abolishes kinase activity." evidence="5">
    <original>K</original>
    <variation>A</variation>
    <location>
        <position position="124"/>
    </location>
</feature>
<feature type="mutagenesis site" description="In cst-1; abolishes kinase activity." evidence="5">
    <original>G</original>
    <variation>R</variation>
    <location>
        <position position="157"/>
    </location>
</feature>
<evidence type="ECO:0000250" key="1">
    <source>
        <dbReference type="UniProtKB" id="O48814"/>
    </source>
</evidence>
<evidence type="ECO:0000255" key="2">
    <source>
        <dbReference type="PROSITE-ProRule" id="PRU00159"/>
    </source>
</evidence>
<evidence type="ECO:0000256" key="3">
    <source>
        <dbReference type="SAM" id="MobiDB-lite"/>
    </source>
</evidence>
<evidence type="ECO:0000269" key="4">
    <source>
    </source>
</evidence>
<evidence type="ECO:0000269" key="5">
    <source>
    </source>
</evidence>
<evidence type="ECO:0000303" key="6">
    <source>
    </source>
</evidence>
<evidence type="ECO:0000303" key="7">
    <source>
    </source>
</evidence>
<evidence type="ECO:0000303" key="8">
    <source>
    </source>
</evidence>
<evidence type="ECO:0000305" key="9"/>
<evidence type="ECO:0000305" key="10">
    <source>
    </source>
</evidence>
<evidence type="ECO:0000305" key="11">
    <source>
    </source>
</evidence>
<evidence type="ECO:0000305" key="12">
    <source>
    </source>
</evidence>
<evidence type="ECO:0007744" key="13">
    <source>
    </source>
</evidence>
<evidence type="ECO:0007744" key="14">
    <source>
    </source>
</evidence>
<evidence type="ECO:0007744" key="15">
    <source>
    </source>
</evidence>
<name>CST_ARATH</name>
<keyword id="KW-0025">Alternative splicing</keyword>
<keyword id="KW-0067">ATP-binding</keyword>
<keyword id="KW-1003">Cell membrane</keyword>
<keyword id="KW-0418">Kinase</keyword>
<keyword id="KW-0449">Lipoprotein</keyword>
<keyword id="KW-0472">Membrane</keyword>
<keyword id="KW-0519">Myristate</keyword>
<keyword id="KW-0547">Nucleotide-binding</keyword>
<keyword id="KW-0539">Nucleus</keyword>
<keyword id="KW-0564">Palmitate</keyword>
<keyword id="KW-0597">Phosphoprotein</keyword>
<keyword id="KW-1185">Reference proteome</keyword>
<keyword id="KW-0723">Serine/threonine-protein kinase</keyword>
<keyword id="KW-0808">Transferase</keyword>
<accession>P27450</accession>
<accession>O81792</accession>
<accession>Q8VZ07</accession>
<accession>Q9M068</accession>
<reference key="1">
    <citation type="journal article" date="1991" name="Proc. Natl. Acad. Sci. U.S.A.">
        <title>Gap junction protein homologue from Arabidopsis thaliana: evidence for connexins in plants.</title>
        <authorList>
            <person name="Meiners S."/>
            <person name="Xu A."/>
            <person name="Schindler M."/>
        </authorList>
    </citation>
    <scope>PRELIMINARY NUCLEOTIDE SEQUENCE [MRNA]</scope>
</reference>
<reference key="2">
    <citation type="journal article" date="1999" name="Nature">
        <title>Sequence and analysis of chromosome 4 of the plant Arabidopsis thaliana.</title>
        <authorList>
            <person name="Mayer K.F.X."/>
            <person name="Schueller C."/>
            <person name="Wambutt R."/>
            <person name="Murphy G."/>
            <person name="Volckaert G."/>
            <person name="Pohl T."/>
            <person name="Duesterhoeft A."/>
            <person name="Stiekema W."/>
            <person name="Entian K.-D."/>
            <person name="Terryn N."/>
            <person name="Harris B."/>
            <person name="Ansorge W."/>
            <person name="Brandt P."/>
            <person name="Grivell L.A."/>
            <person name="Rieger M."/>
            <person name="Weichselgartner M."/>
            <person name="de Simone V."/>
            <person name="Obermaier B."/>
            <person name="Mache R."/>
            <person name="Mueller M."/>
            <person name="Kreis M."/>
            <person name="Delseny M."/>
            <person name="Puigdomenech P."/>
            <person name="Watson M."/>
            <person name="Schmidtheini T."/>
            <person name="Reichert B."/>
            <person name="Portetelle D."/>
            <person name="Perez-Alonso M."/>
            <person name="Boutry M."/>
            <person name="Bancroft I."/>
            <person name="Vos P."/>
            <person name="Hoheisel J."/>
            <person name="Zimmermann W."/>
            <person name="Wedler H."/>
            <person name="Ridley P."/>
            <person name="Langham S.-A."/>
            <person name="McCullagh B."/>
            <person name="Bilham L."/>
            <person name="Robben J."/>
            <person name="van der Schueren J."/>
            <person name="Grymonprez B."/>
            <person name="Chuang Y.-J."/>
            <person name="Vandenbussche F."/>
            <person name="Braeken M."/>
            <person name="Weltjens I."/>
            <person name="Voet M."/>
            <person name="Bastiaens I."/>
            <person name="Aert R."/>
            <person name="Defoor E."/>
            <person name="Weitzenegger T."/>
            <person name="Bothe G."/>
            <person name="Ramsperger U."/>
            <person name="Hilbert H."/>
            <person name="Braun M."/>
            <person name="Holzer E."/>
            <person name="Brandt A."/>
            <person name="Peters S."/>
            <person name="van Staveren M."/>
            <person name="Dirkse W."/>
            <person name="Mooijman P."/>
            <person name="Klein Lankhorst R."/>
            <person name="Rose M."/>
            <person name="Hauf J."/>
            <person name="Koetter P."/>
            <person name="Berneiser S."/>
            <person name="Hempel S."/>
            <person name="Feldpausch M."/>
            <person name="Lamberth S."/>
            <person name="Van den Daele H."/>
            <person name="De Keyser A."/>
            <person name="Buysshaert C."/>
            <person name="Gielen J."/>
            <person name="Villarroel R."/>
            <person name="De Clercq R."/>
            <person name="van Montagu M."/>
            <person name="Rogers J."/>
            <person name="Cronin A."/>
            <person name="Quail M.A."/>
            <person name="Bray-Allen S."/>
            <person name="Clark L."/>
            <person name="Doggett J."/>
            <person name="Hall S."/>
            <person name="Kay M."/>
            <person name="Lennard N."/>
            <person name="McLay K."/>
            <person name="Mayes R."/>
            <person name="Pettett A."/>
            <person name="Rajandream M.A."/>
            <person name="Lyne M."/>
            <person name="Benes V."/>
            <person name="Rechmann S."/>
            <person name="Borkova D."/>
            <person name="Bloecker H."/>
            <person name="Scharfe M."/>
            <person name="Grimm M."/>
            <person name="Loehnert T.-H."/>
            <person name="Dose S."/>
            <person name="de Haan M."/>
            <person name="Maarse A.C."/>
            <person name="Schaefer M."/>
            <person name="Mueller-Auer S."/>
            <person name="Gabel C."/>
            <person name="Fuchs M."/>
            <person name="Fartmann B."/>
            <person name="Granderath K."/>
            <person name="Dauner D."/>
            <person name="Herzl A."/>
            <person name="Neumann S."/>
            <person name="Argiriou A."/>
            <person name="Vitale D."/>
            <person name="Liguori R."/>
            <person name="Piravandi E."/>
            <person name="Massenet O."/>
            <person name="Quigley F."/>
            <person name="Clabauld G."/>
            <person name="Muendlein A."/>
            <person name="Felber R."/>
            <person name="Schnabl S."/>
            <person name="Hiller R."/>
            <person name="Schmidt W."/>
            <person name="Lecharny A."/>
            <person name="Aubourg S."/>
            <person name="Chefdor F."/>
            <person name="Cooke R."/>
            <person name="Berger C."/>
            <person name="Monfort A."/>
            <person name="Casacuberta E."/>
            <person name="Gibbons T."/>
            <person name="Weber N."/>
            <person name="Vandenbol M."/>
            <person name="Bargues M."/>
            <person name="Terol J."/>
            <person name="Torres A."/>
            <person name="Perez-Perez A."/>
            <person name="Purnelle B."/>
            <person name="Bent E."/>
            <person name="Johnson S."/>
            <person name="Tacon D."/>
            <person name="Jesse T."/>
            <person name="Heijnen L."/>
            <person name="Schwarz S."/>
            <person name="Scholler P."/>
            <person name="Heber S."/>
            <person name="Francs P."/>
            <person name="Bielke C."/>
            <person name="Frishman D."/>
            <person name="Haase D."/>
            <person name="Lemcke K."/>
            <person name="Mewes H.-W."/>
            <person name="Stocker S."/>
            <person name="Zaccaria P."/>
            <person name="Bevan M."/>
            <person name="Wilson R.K."/>
            <person name="de la Bastide M."/>
            <person name="Habermann K."/>
            <person name="Parnell L."/>
            <person name="Dedhia N."/>
            <person name="Gnoj L."/>
            <person name="Schutz K."/>
            <person name="Huang E."/>
            <person name="Spiegel L."/>
            <person name="Sekhon M."/>
            <person name="Murray J."/>
            <person name="Sheet P."/>
            <person name="Cordes M."/>
            <person name="Abu-Threideh J."/>
            <person name="Stoneking T."/>
            <person name="Kalicki J."/>
            <person name="Graves T."/>
            <person name="Harmon G."/>
            <person name="Edwards J."/>
            <person name="Latreille P."/>
            <person name="Courtney L."/>
            <person name="Cloud J."/>
            <person name="Abbott A."/>
            <person name="Scott K."/>
            <person name="Johnson D."/>
            <person name="Minx P."/>
            <person name="Bentley D."/>
            <person name="Fulton B."/>
            <person name="Miller N."/>
            <person name="Greco T."/>
            <person name="Kemp K."/>
            <person name="Kramer J."/>
            <person name="Fulton L."/>
            <person name="Mardis E."/>
            <person name="Dante M."/>
            <person name="Pepin K."/>
            <person name="Hillier L.W."/>
            <person name="Nelson J."/>
            <person name="Spieth J."/>
            <person name="Ryan E."/>
            <person name="Andrews S."/>
            <person name="Geisel C."/>
            <person name="Layman D."/>
            <person name="Du H."/>
            <person name="Ali J."/>
            <person name="Berghoff A."/>
            <person name="Jones K."/>
            <person name="Drone K."/>
            <person name="Cotton M."/>
            <person name="Joshu C."/>
            <person name="Antonoiu B."/>
            <person name="Zidanic M."/>
            <person name="Strong C."/>
            <person name="Sun H."/>
            <person name="Lamar B."/>
            <person name="Yordan C."/>
            <person name="Ma P."/>
            <person name="Zhong J."/>
            <person name="Preston R."/>
            <person name="Vil D."/>
            <person name="Shekher M."/>
            <person name="Matero A."/>
            <person name="Shah R."/>
            <person name="Swaby I.K."/>
            <person name="O'Shaughnessy A."/>
            <person name="Rodriguez M."/>
            <person name="Hoffman J."/>
            <person name="Till S."/>
            <person name="Granat S."/>
            <person name="Shohdy N."/>
            <person name="Hasegawa A."/>
            <person name="Hameed A."/>
            <person name="Lodhi M."/>
            <person name="Johnson A."/>
            <person name="Chen E."/>
            <person name="Marra M.A."/>
            <person name="Martienssen R."/>
            <person name="McCombie W.R."/>
        </authorList>
    </citation>
    <scope>NUCLEOTIDE SEQUENCE [LARGE SCALE GENOMIC DNA]</scope>
    <source>
        <strain>cv. Columbia</strain>
    </source>
</reference>
<reference key="3">
    <citation type="journal article" date="2017" name="Plant J.">
        <title>Araport11: a complete reannotation of the Arabidopsis thaliana reference genome.</title>
        <authorList>
            <person name="Cheng C.Y."/>
            <person name="Krishnakumar V."/>
            <person name="Chan A.P."/>
            <person name="Thibaud-Nissen F."/>
            <person name="Schobel S."/>
            <person name="Town C.D."/>
        </authorList>
    </citation>
    <scope>GENOME REANNOTATION</scope>
    <source>
        <strain>cv. Columbia</strain>
    </source>
</reference>
<reference key="4">
    <citation type="journal article" date="2003" name="Science">
        <title>Empirical analysis of transcriptional activity in the Arabidopsis genome.</title>
        <authorList>
            <person name="Yamada K."/>
            <person name="Lim J."/>
            <person name="Dale J.M."/>
            <person name="Chen H."/>
            <person name="Shinn P."/>
            <person name="Palm C.J."/>
            <person name="Southwick A.M."/>
            <person name="Wu H.C."/>
            <person name="Kim C.J."/>
            <person name="Nguyen M."/>
            <person name="Pham P.K."/>
            <person name="Cheuk R.F."/>
            <person name="Karlin-Newmann G."/>
            <person name="Liu S.X."/>
            <person name="Lam B."/>
            <person name="Sakano H."/>
            <person name="Wu T."/>
            <person name="Yu G."/>
            <person name="Miranda M."/>
            <person name="Quach H.L."/>
            <person name="Tripp M."/>
            <person name="Chang C.H."/>
            <person name="Lee J.M."/>
            <person name="Toriumi M.J."/>
            <person name="Chan M.M."/>
            <person name="Tang C.C."/>
            <person name="Onodera C.S."/>
            <person name="Deng J.M."/>
            <person name="Akiyama K."/>
            <person name="Ansari Y."/>
            <person name="Arakawa T."/>
            <person name="Banh J."/>
            <person name="Banno F."/>
            <person name="Bowser L."/>
            <person name="Brooks S.Y."/>
            <person name="Carninci P."/>
            <person name="Chao Q."/>
            <person name="Choy N."/>
            <person name="Enju A."/>
            <person name="Goldsmith A.D."/>
            <person name="Gurjal M."/>
            <person name="Hansen N.F."/>
            <person name="Hayashizaki Y."/>
            <person name="Johnson-Hopson C."/>
            <person name="Hsuan V.W."/>
            <person name="Iida K."/>
            <person name="Karnes M."/>
            <person name="Khan S."/>
            <person name="Koesema E."/>
            <person name="Ishida J."/>
            <person name="Jiang P.X."/>
            <person name="Jones T."/>
            <person name="Kawai J."/>
            <person name="Kamiya A."/>
            <person name="Meyers C."/>
            <person name="Nakajima M."/>
            <person name="Narusaka M."/>
            <person name="Seki M."/>
            <person name="Sakurai T."/>
            <person name="Satou M."/>
            <person name="Tamse R."/>
            <person name="Vaysberg M."/>
            <person name="Wallender E.K."/>
            <person name="Wong C."/>
            <person name="Yamamura Y."/>
            <person name="Yuan S."/>
            <person name="Shinozaki K."/>
            <person name="Davis R.W."/>
            <person name="Theologis A."/>
            <person name="Ecker J.R."/>
        </authorList>
    </citation>
    <scope>NUCLEOTIDE SEQUENCE [LARGE SCALE MRNA]</scope>
    <source>
        <strain>cv. Columbia</strain>
    </source>
</reference>
<reference key="5">
    <citation type="journal article" date="1993" name="Plant Cell">
        <title>The proposed plant connexin is a protein kinase-like protein.</title>
        <authorList>
            <person name="Mushegian A.R."/>
            <person name="Koonin E.V."/>
        </authorList>
    </citation>
    <scope>DISCUSSION OF SEQUENCE</scope>
</reference>
<reference key="6">
    <citation type="journal article" date="2003" name="Mol. Cell. Proteomics">
        <title>Large-scale analysis of in vivo phosphorylated membrane proteins by immobilized metal ion affinity chromatography and mass spectrometry.</title>
        <authorList>
            <person name="Nuehse T.S."/>
            <person name="Stensballe A."/>
            <person name="Jensen O.N."/>
            <person name="Peck S.C."/>
        </authorList>
    </citation>
    <scope>PHOSPHORYLATION [LARGE SCALE ANALYSIS] AT SER-117</scope>
    <scope>IDENTIFICATION BY MASS SPECTROMETRY [LARGE SCALE ANALYSIS]</scope>
    <source>
        <strain>cv. La-0</strain>
    </source>
</reference>
<reference key="7">
    <citation type="journal article" date="2004" name="Plant Cell">
        <title>Phosphoproteomics of the Arabidopsis plasma membrane and a new phosphorylation site database.</title>
        <authorList>
            <person name="Nuehse T.S."/>
            <person name="Stensballe A."/>
            <person name="Jensen O.N."/>
            <person name="Peck S.C."/>
        </authorList>
    </citation>
    <scope>PHOSPHORYLATION [LARGE SCALE ANALYSIS] AT SER-117</scope>
    <scope>IDENTIFICATION BY MASS SPECTROMETRY [LARGE SCALE ANALYSIS]</scope>
</reference>
<reference key="8">
    <citation type="journal article" date="2007" name="Mol. Cell. Proteomics">
        <title>Temporal analysis of sucrose-induced phosphorylation changes in plasma membrane proteins of Arabidopsis.</title>
        <authorList>
            <person name="Niittylae T."/>
            <person name="Fuglsang A.T."/>
            <person name="Palmgren M.G."/>
            <person name="Frommer W.B."/>
            <person name="Schulze W.X."/>
        </authorList>
    </citation>
    <scope>PHOSPHORYLATION [LARGE SCALE ANALYSIS] AT SER-117</scope>
    <scope>IDENTIFICATION BY MASS SPECTROMETRY [LARGE SCALE ANALYSIS]</scope>
    <source>
        <tissue>Seedling</tissue>
    </source>
</reference>
<reference key="9">
    <citation type="journal article" date="2011" name="FEBS Lett.">
        <title>Protein N-acylation overrides differing targeting signals.</title>
        <authorList>
            <person name="Stael S."/>
            <person name="Bayer R.G."/>
            <person name="Mehlmer N."/>
            <person name="Teige M."/>
        </authorList>
    </citation>
    <scope>SUBCELLULAR LOCATION</scope>
    <scope>MUTAGENESIS OF GLY-2</scope>
    <scope>MYRISTOYLATION AT GLY-2</scope>
</reference>
<reference key="10">
    <citation type="journal article" date="2011" name="Plant Physiol.">
        <title>CAST AWAY, a membrane-associated receptor-like kinase, inhibits organ abscission in Arabidopsis.</title>
        <authorList>
            <person name="Burr C.A."/>
            <person name="Leslie M.E."/>
            <person name="Orlowski S.K."/>
            <person name="Chen I."/>
            <person name="Wright C.E."/>
            <person name="Daniels M.J."/>
            <person name="Liljegren S.J."/>
        </authorList>
    </citation>
    <scope>FUNCTION</scope>
    <scope>INTERACTION WITH SOBIR1/EVR AND RLK5/HAE</scope>
    <scope>SUBCELLULAR LOCATION</scope>
    <scope>AUTOPHOSPHORYLATION</scope>
    <scope>TISSUE SPECIFICITY</scope>
    <scope>MUTAGENESIS OF GLY-2; CYS-4; LYS-124 AND GLY-157</scope>
    <scope>PALMITOYLATION AT CYS-4</scope>
    <scope>MYRISTOYLATION AT GLY-2</scope>
</reference>
<proteinExistence type="evidence at protein level"/>